<organism>
    <name type="scientific">Pongo abelii</name>
    <name type="common">Sumatran orangutan</name>
    <name type="synonym">Pongo pygmaeus abelii</name>
    <dbReference type="NCBI Taxonomy" id="9601"/>
    <lineage>
        <taxon>Eukaryota</taxon>
        <taxon>Metazoa</taxon>
        <taxon>Chordata</taxon>
        <taxon>Craniata</taxon>
        <taxon>Vertebrata</taxon>
        <taxon>Euteleostomi</taxon>
        <taxon>Mammalia</taxon>
        <taxon>Eutheria</taxon>
        <taxon>Euarchontoglires</taxon>
        <taxon>Primates</taxon>
        <taxon>Haplorrhini</taxon>
        <taxon>Catarrhini</taxon>
        <taxon>Hominidae</taxon>
        <taxon>Pongo</taxon>
    </lineage>
</organism>
<proteinExistence type="evidence at transcript level"/>
<reference key="1">
    <citation type="submission" date="2004-11" db="EMBL/GenBank/DDBJ databases">
        <authorList>
            <consortium name="The German cDNA consortium"/>
        </authorList>
    </citation>
    <scope>NUCLEOTIDE SEQUENCE [LARGE SCALE MRNA]</scope>
    <source>
        <tissue>Brain cortex</tissue>
    </source>
</reference>
<comment type="function">
    <text evidence="1">Mitochondrial GTPase that mediates the disassembly of ribosomes from messenger RNA at the termination of mitochondrial protein biosynthesis. Acts in collaboration with MRRF. GTP hydrolysis follows the ribosome disassembly and probably occurs on the ribosome large subunit. Not involved in the GTP-dependent ribosomal translocation step during translation elongation.</text>
</comment>
<comment type="catalytic activity">
    <reaction evidence="1">
        <text>GTP + H2O = GDP + phosphate + H(+)</text>
        <dbReference type="Rhea" id="RHEA:19669"/>
        <dbReference type="ChEBI" id="CHEBI:15377"/>
        <dbReference type="ChEBI" id="CHEBI:15378"/>
        <dbReference type="ChEBI" id="CHEBI:37565"/>
        <dbReference type="ChEBI" id="CHEBI:43474"/>
        <dbReference type="ChEBI" id="CHEBI:58189"/>
    </reaction>
    <physiologicalReaction direction="left-to-right" evidence="1">
        <dbReference type="Rhea" id="RHEA:19670"/>
    </physiologicalReaction>
</comment>
<comment type="subcellular location">
    <subcellularLocation>
        <location evidence="1">Mitochondrion</location>
    </subcellularLocation>
</comment>
<comment type="miscellaneous">
    <text evidence="1">This protein may be expected to contain an N-terminal transit peptide but none has been predicted.</text>
</comment>
<comment type="similarity">
    <text evidence="1">Belongs to the TRAFAC class translation factor GTPase superfamily. Classic translation factor GTPase family. EF-G/EF-2 subfamily.</text>
</comment>
<feature type="chain" id="PRO_0000385593" description="Ribosome-releasing factor 2, mitochondrial">
    <location>
        <begin position="1"/>
        <end position="777"/>
    </location>
</feature>
<feature type="domain" description="tr-type G">
    <location>
        <begin position="68"/>
        <end position="353"/>
    </location>
</feature>
<feature type="binding site" evidence="1">
    <location>
        <begin position="77"/>
        <end position="84"/>
    </location>
    <ligand>
        <name>GTP</name>
        <dbReference type="ChEBI" id="CHEBI:37565"/>
    </ligand>
</feature>
<feature type="binding site" evidence="1">
    <location>
        <begin position="141"/>
        <end position="145"/>
    </location>
    <ligand>
        <name>GTP</name>
        <dbReference type="ChEBI" id="CHEBI:37565"/>
    </ligand>
</feature>
<feature type="binding site" evidence="1">
    <location>
        <begin position="195"/>
        <end position="198"/>
    </location>
    <ligand>
        <name>GTP</name>
        <dbReference type="ChEBI" id="CHEBI:37565"/>
    </ligand>
</feature>
<sequence length="777" mass="86038">MLTNLRIFAMSHQTIPSVCINNICCYKIRASLKRLKPHVPLGRNCSSLPGLIGNDIKSLHSIINPPIAKIRNIGIMAHIDAGKTTTTERILYYSGYTRSLGDVDDGDTVTDFMAQERERGITIQSAAVTFDWKGYRVNLIDTPGHVDFTLEVERCLRVLDGAVAVFDASAGVEAQTLTVWRQADKHNIPRICFLNKMDKTGASFKYAVESIREKLKAKPLLLQLPIGEAKTFKGVVDVVTKEKLLWNCNSNDGKDFERKPLLEMNDPELLKETTEARNALIEQVADLDDEFADLVLEEFSENFDLLPAEKLQTAIHRVTLAQTAVPVLCGSALKNKGIQPLLDAVTMYLPSPEECNCEFLQWYKDDLCALAFKVLHDKQRGPLVFMRIYSGTIKPQLAIHNINGNCTERISRLLLPFADQHVEIPSLTAGNIALTVGLKHTATGDTIVSSKSSALAAARRAEREGEKKHRQNSEAERLVLAGVEIPEPVFFCTIEPPSVSKQPDLEHALKCLQREDPSLKVRLDPDSGQTVLCGMGELHIEIIHDRIKREYGLEAYLGPLQVAYRETILNSVRATDTLDRTLGDKRHLVTVEVEARPTETTSVMPVIEYAESIHEGLLKVSQEAIENGIYSACLQGPLLGSPIQDVAITLHSLTIHPGTSTTMISACVSRCVQKALKKADKQVLEPLMNLEVTVARDYLSPVLADLAQRRGNIQEIQTRQDNKVVIGFVPLAEIMGYSTVLRTLTSGSATFALELSTNQAMNPQDQNTLLNRRSGLT</sequence>
<name>RRF2M_PONAB</name>
<dbReference type="EC" id="3.6.5.-" evidence="1"/>
<dbReference type="EMBL" id="CR860700">
    <property type="protein sequence ID" value="CAH92816.1"/>
    <property type="molecule type" value="mRNA"/>
</dbReference>
<dbReference type="RefSeq" id="NP_001126644.1">
    <property type="nucleotide sequence ID" value="NM_001133172.1"/>
</dbReference>
<dbReference type="SMR" id="Q5R600"/>
<dbReference type="FunCoup" id="Q5R600">
    <property type="interactions" value="785"/>
</dbReference>
<dbReference type="STRING" id="9601.ENSPPYP00000017390"/>
<dbReference type="GeneID" id="100173642"/>
<dbReference type="KEGG" id="pon:100173642"/>
<dbReference type="CTD" id="84340"/>
<dbReference type="eggNOG" id="KOG0464">
    <property type="taxonomic scope" value="Eukaryota"/>
</dbReference>
<dbReference type="InParanoid" id="Q5R600"/>
<dbReference type="OrthoDB" id="198619at2759"/>
<dbReference type="Proteomes" id="UP000001595">
    <property type="component" value="Unplaced"/>
</dbReference>
<dbReference type="GO" id="GO:0005739">
    <property type="term" value="C:mitochondrion"/>
    <property type="evidence" value="ECO:0007669"/>
    <property type="project" value="UniProtKB-SubCell"/>
</dbReference>
<dbReference type="GO" id="GO:0005525">
    <property type="term" value="F:GTP binding"/>
    <property type="evidence" value="ECO:0007669"/>
    <property type="project" value="UniProtKB-UniRule"/>
</dbReference>
<dbReference type="GO" id="GO:0003924">
    <property type="term" value="F:GTPase activity"/>
    <property type="evidence" value="ECO:0000250"/>
    <property type="project" value="UniProtKB"/>
</dbReference>
<dbReference type="GO" id="GO:0032543">
    <property type="term" value="P:mitochondrial translation"/>
    <property type="evidence" value="ECO:0000250"/>
    <property type="project" value="UniProtKB"/>
</dbReference>
<dbReference type="GO" id="GO:0032790">
    <property type="term" value="P:ribosome disassembly"/>
    <property type="evidence" value="ECO:0000250"/>
    <property type="project" value="UniProtKB"/>
</dbReference>
<dbReference type="CDD" id="cd01886">
    <property type="entry name" value="EF-G"/>
    <property type="match status" value="1"/>
</dbReference>
<dbReference type="CDD" id="cd16262">
    <property type="entry name" value="EFG_III"/>
    <property type="match status" value="1"/>
</dbReference>
<dbReference type="CDD" id="cd03713">
    <property type="entry name" value="EFG_mtEFG_C"/>
    <property type="match status" value="1"/>
</dbReference>
<dbReference type="CDD" id="cd04092">
    <property type="entry name" value="mtEFG2_II_like"/>
    <property type="match status" value="1"/>
</dbReference>
<dbReference type="CDD" id="cd01693">
    <property type="entry name" value="mtEFG2_like_IV"/>
    <property type="match status" value="1"/>
</dbReference>
<dbReference type="FunFam" id="2.40.30.10:FF:000053">
    <property type="entry name" value="Ribosome-releasing factor 2, mitochondrial"/>
    <property type="match status" value="1"/>
</dbReference>
<dbReference type="FunFam" id="3.30.230.10:FF:000033">
    <property type="entry name" value="Ribosome-releasing factor 2, mitochondrial"/>
    <property type="match status" value="1"/>
</dbReference>
<dbReference type="FunFam" id="3.30.70.240:FF:000008">
    <property type="entry name" value="Ribosome-releasing factor 2, mitochondrial"/>
    <property type="match status" value="1"/>
</dbReference>
<dbReference type="FunFam" id="3.30.70.870:FF:000005">
    <property type="entry name" value="Ribosome-releasing factor 2, mitochondrial"/>
    <property type="match status" value="1"/>
</dbReference>
<dbReference type="FunFam" id="3.40.50.300:FF:000514">
    <property type="entry name" value="Ribosome-releasing factor 2, mitochondrial"/>
    <property type="match status" value="1"/>
</dbReference>
<dbReference type="Gene3D" id="3.30.230.10">
    <property type="match status" value="1"/>
</dbReference>
<dbReference type="Gene3D" id="3.30.70.240">
    <property type="match status" value="1"/>
</dbReference>
<dbReference type="Gene3D" id="3.30.70.870">
    <property type="entry name" value="Elongation Factor G (Translational Gtpase), domain 3"/>
    <property type="match status" value="1"/>
</dbReference>
<dbReference type="Gene3D" id="3.40.50.300">
    <property type="entry name" value="P-loop containing nucleotide triphosphate hydrolases"/>
    <property type="match status" value="1"/>
</dbReference>
<dbReference type="Gene3D" id="2.40.30.10">
    <property type="entry name" value="Translation factors"/>
    <property type="match status" value="1"/>
</dbReference>
<dbReference type="HAMAP" id="MF_03059">
    <property type="entry name" value="mEF_G_2"/>
    <property type="match status" value="1"/>
</dbReference>
<dbReference type="InterPro" id="IPR053905">
    <property type="entry name" value="EF-G-like_DII"/>
</dbReference>
<dbReference type="InterPro" id="IPR030851">
    <property type="entry name" value="EFG2"/>
</dbReference>
<dbReference type="InterPro" id="IPR041095">
    <property type="entry name" value="EFG_II"/>
</dbReference>
<dbReference type="InterPro" id="IPR009022">
    <property type="entry name" value="EFG_III"/>
</dbReference>
<dbReference type="InterPro" id="IPR035647">
    <property type="entry name" value="EFG_III/V"/>
</dbReference>
<dbReference type="InterPro" id="IPR035649">
    <property type="entry name" value="EFG_V"/>
</dbReference>
<dbReference type="InterPro" id="IPR000640">
    <property type="entry name" value="EFG_V-like"/>
</dbReference>
<dbReference type="InterPro" id="IPR031157">
    <property type="entry name" value="G_TR_CS"/>
</dbReference>
<dbReference type="InterPro" id="IPR027417">
    <property type="entry name" value="P-loop_NTPase"/>
</dbReference>
<dbReference type="InterPro" id="IPR020568">
    <property type="entry name" value="Ribosomal_Su5_D2-typ_SF"/>
</dbReference>
<dbReference type="InterPro" id="IPR014721">
    <property type="entry name" value="Ribsml_uS5_D2-typ_fold_subgr"/>
</dbReference>
<dbReference type="InterPro" id="IPR005225">
    <property type="entry name" value="Small_GTP-bd"/>
</dbReference>
<dbReference type="InterPro" id="IPR000795">
    <property type="entry name" value="T_Tr_GTP-bd_dom"/>
</dbReference>
<dbReference type="InterPro" id="IPR009000">
    <property type="entry name" value="Transl_B-barrel_sf"/>
</dbReference>
<dbReference type="InterPro" id="IPR005517">
    <property type="entry name" value="Transl_elong_EFG/EF2_IV"/>
</dbReference>
<dbReference type="NCBIfam" id="TIGR00231">
    <property type="entry name" value="small_GTP"/>
    <property type="match status" value="1"/>
</dbReference>
<dbReference type="PANTHER" id="PTHR43261:SF1">
    <property type="entry name" value="RIBOSOME-RELEASING FACTOR 2, MITOCHONDRIAL"/>
    <property type="match status" value="1"/>
</dbReference>
<dbReference type="PANTHER" id="PTHR43261">
    <property type="entry name" value="TRANSLATION ELONGATION FACTOR G-RELATED"/>
    <property type="match status" value="1"/>
</dbReference>
<dbReference type="Pfam" id="PF22042">
    <property type="entry name" value="EF-G_D2"/>
    <property type="match status" value="1"/>
</dbReference>
<dbReference type="Pfam" id="PF00679">
    <property type="entry name" value="EFG_C"/>
    <property type="match status" value="1"/>
</dbReference>
<dbReference type="Pfam" id="PF14492">
    <property type="entry name" value="EFG_III"/>
    <property type="match status" value="1"/>
</dbReference>
<dbReference type="Pfam" id="PF03764">
    <property type="entry name" value="EFG_IV"/>
    <property type="match status" value="1"/>
</dbReference>
<dbReference type="Pfam" id="PF00009">
    <property type="entry name" value="GTP_EFTU"/>
    <property type="match status" value="1"/>
</dbReference>
<dbReference type="PRINTS" id="PR00315">
    <property type="entry name" value="ELONGATNFCT"/>
</dbReference>
<dbReference type="SMART" id="SM00838">
    <property type="entry name" value="EFG_C"/>
    <property type="match status" value="1"/>
</dbReference>
<dbReference type="SMART" id="SM00889">
    <property type="entry name" value="EFG_IV"/>
    <property type="match status" value="1"/>
</dbReference>
<dbReference type="SUPFAM" id="SSF54980">
    <property type="entry name" value="EF-G C-terminal domain-like"/>
    <property type="match status" value="2"/>
</dbReference>
<dbReference type="SUPFAM" id="SSF52540">
    <property type="entry name" value="P-loop containing nucleoside triphosphate hydrolases"/>
    <property type="match status" value="1"/>
</dbReference>
<dbReference type="SUPFAM" id="SSF54211">
    <property type="entry name" value="Ribosomal protein S5 domain 2-like"/>
    <property type="match status" value="1"/>
</dbReference>
<dbReference type="SUPFAM" id="SSF50447">
    <property type="entry name" value="Translation proteins"/>
    <property type="match status" value="1"/>
</dbReference>
<dbReference type="PROSITE" id="PS00301">
    <property type="entry name" value="G_TR_1"/>
    <property type="match status" value="1"/>
</dbReference>
<dbReference type="PROSITE" id="PS51722">
    <property type="entry name" value="G_TR_2"/>
    <property type="match status" value="1"/>
</dbReference>
<accession>Q5R600</accession>
<gene>
    <name evidence="1" type="primary">GFM2</name>
    <name evidence="1" type="synonym">EFG2</name>
</gene>
<keyword id="KW-0342">GTP-binding</keyword>
<keyword id="KW-0378">Hydrolase</keyword>
<keyword id="KW-0496">Mitochondrion</keyword>
<keyword id="KW-0547">Nucleotide-binding</keyword>
<keyword id="KW-0648">Protein biosynthesis</keyword>
<keyword id="KW-1185">Reference proteome</keyword>
<protein>
    <recommendedName>
        <fullName evidence="1">Ribosome-releasing factor 2, mitochondrial</fullName>
        <shortName evidence="1">RRF2mt</shortName>
        <ecNumber evidence="1">3.6.5.-</ecNumber>
    </recommendedName>
    <alternativeName>
        <fullName evidence="1">Elongation factor G 2, mitochondrial</fullName>
        <shortName evidence="1">EF-G2mt</shortName>
        <shortName evidence="1">mEF-G 2</shortName>
    </alternativeName>
</protein>
<evidence type="ECO:0000255" key="1">
    <source>
        <dbReference type="HAMAP-Rule" id="MF_03059"/>
    </source>
</evidence>